<keyword id="KW-0175">Coiled coil</keyword>
<keyword id="KW-0963">Cytoplasm</keyword>
<proteinExistence type="inferred from homology"/>
<reference key="1">
    <citation type="submission" date="2009-02" db="EMBL/GenBank/DDBJ databases">
        <title>Vibrio splendidus str. LGP32 complete genome.</title>
        <authorList>
            <person name="Mazel D."/>
            <person name="Le Roux F."/>
        </authorList>
    </citation>
    <scope>NUCLEOTIDE SEQUENCE [LARGE SCALE GENOMIC DNA]</scope>
    <source>
        <strain>LGP32</strain>
    </source>
</reference>
<accession>B7VQW7</accession>
<protein>
    <recommendedName>
        <fullName evidence="1">Pole-localizer protein TmaR</fullName>
    </recommendedName>
</protein>
<evidence type="ECO:0000255" key="1">
    <source>
        <dbReference type="HAMAP-Rule" id="MF_00683"/>
    </source>
</evidence>
<comment type="function">
    <text evidence="1">Pole-localizer protein involved in the regulation of several cellular processes.</text>
</comment>
<comment type="subcellular location">
    <subcellularLocation>
        <location evidence="1">Cytoplasm</location>
    </subcellularLocation>
</comment>
<comment type="similarity">
    <text evidence="1">Belongs to the pole-localizer TmaR family.</text>
</comment>
<feature type="chain" id="PRO_1000147747" description="Pole-localizer protein TmaR">
    <location>
        <begin position="1"/>
        <end position="104"/>
    </location>
</feature>
<feature type="coiled-coil region" evidence="1">
    <location>
        <begin position="7"/>
        <end position="34"/>
    </location>
</feature>
<feature type="coiled-coil region" evidence="1">
    <location>
        <begin position="76"/>
        <end position="96"/>
    </location>
</feature>
<dbReference type="EMBL" id="FM954973">
    <property type="protein sequence ID" value="CAV25788.1"/>
    <property type="molecule type" value="Genomic_DNA"/>
</dbReference>
<dbReference type="SMR" id="B7VQW7"/>
<dbReference type="STRING" id="575788.VS_II0351"/>
<dbReference type="KEGG" id="vsp:VS_II0351"/>
<dbReference type="eggNOG" id="COG2926">
    <property type="taxonomic scope" value="Bacteria"/>
</dbReference>
<dbReference type="HOGENOM" id="CLU_153146_0_0_6"/>
<dbReference type="Proteomes" id="UP000009100">
    <property type="component" value="Chromosome 2"/>
</dbReference>
<dbReference type="GO" id="GO:0005829">
    <property type="term" value="C:cytosol"/>
    <property type="evidence" value="ECO:0007669"/>
    <property type="project" value="TreeGrafter"/>
</dbReference>
<dbReference type="HAMAP" id="MF_00683">
    <property type="entry name" value="Pole_loc_TmaR"/>
    <property type="match status" value="1"/>
</dbReference>
<dbReference type="InterPro" id="IPR007458">
    <property type="entry name" value="DUF496"/>
</dbReference>
<dbReference type="NCBIfam" id="NF003844">
    <property type="entry name" value="PRK05423.1"/>
    <property type="match status" value="1"/>
</dbReference>
<dbReference type="PANTHER" id="PTHR39591">
    <property type="entry name" value="UPF0265 PROTEIN YEEX"/>
    <property type="match status" value="1"/>
</dbReference>
<dbReference type="PANTHER" id="PTHR39591:SF1">
    <property type="entry name" value="UPF0265 PROTEIN YEEX"/>
    <property type="match status" value="1"/>
</dbReference>
<dbReference type="Pfam" id="PF04363">
    <property type="entry name" value="DUF496"/>
    <property type="match status" value="1"/>
</dbReference>
<dbReference type="PIRSF" id="PIRSF028773">
    <property type="entry name" value="UCP028773"/>
    <property type="match status" value="1"/>
</dbReference>
<sequence>MSSVFEIVNQARRKNKLKRELLDNEKKVRDNRKRVDLLDNLLDYIKPEMTHDEILGIIKNMKADYEDRVDDHIIKSAEISKARRDISRRIRELTEEDKQTQGKK</sequence>
<gene>
    <name evidence="1" type="primary">tmaR</name>
    <name type="ordered locus">VS_II0351</name>
</gene>
<organism>
    <name type="scientific">Vibrio atlanticus (strain LGP32)</name>
    <name type="common">Vibrio splendidus (strain Mel32)</name>
    <dbReference type="NCBI Taxonomy" id="575788"/>
    <lineage>
        <taxon>Bacteria</taxon>
        <taxon>Pseudomonadati</taxon>
        <taxon>Pseudomonadota</taxon>
        <taxon>Gammaproteobacteria</taxon>
        <taxon>Vibrionales</taxon>
        <taxon>Vibrionaceae</taxon>
        <taxon>Vibrio</taxon>
    </lineage>
</organism>
<name>TMAR_VIBA3</name>